<dbReference type="EC" id="4.1.1.19"/>
<dbReference type="EMBL" id="AE016877">
    <property type="protein sequence ID" value="AAP10882.1"/>
    <property type="molecule type" value="Genomic_DNA"/>
</dbReference>
<dbReference type="RefSeq" id="NP_833681.1">
    <property type="nucleotide sequence ID" value="NC_004722.1"/>
</dbReference>
<dbReference type="SMR" id="Q819L4"/>
<dbReference type="STRING" id="226900.BC_3962"/>
<dbReference type="KEGG" id="bce:BC3962"/>
<dbReference type="PATRIC" id="fig|226900.8.peg.4086"/>
<dbReference type="HOGENOM" id="CLU_025925_2_1_9"/>
<dbReference type="UniPathway" id="UPA00186">
    <property type="reaction ID" value="UER00284"/>
</dbReference>
<dbReference type="Proteomes" id="UP000001417">
    <property type="component" value="Chromosome"/>
</dbReference>
<dbReference type="GO" id="GO:0005737">
    <property type="term" value="C:cytoplasm"/>
    <property type="evidence" value="ECO:0007669"/>
    <property type="project" value="UniProtKB-SubCell"/>
</dbReference>
<dbReference type="GO" id="GO:0008792">
    <property type="term" value="F:arginine decarboxylase activity"/>
    <property type="evidence" value="ECO:0007669"/>
    <property type="project" value="UniProtKB-EC"/>
</dbReference>
<dbReference type="GO" id="GO:0009446">
    <property type="term" value="P:putrescine biosynthetic process"/>
    <property type="evidence" value="ECO:0007669"/>
    <property type="project" value="UniProtKB-KW"/>
</dbReference>
<dbReference type="GO" id="GO:0008295">
    <property type="term" value="P:spermidine biosynthetic process"/>
    <property type="evidence" value="ECO:0007669"/>
    <property type="project" value="UniProtKB-KW"/>
</dbReference>
<dbReference type="CDD" id="cd00615">
    <property type="entry name" value="Orn_deC_like"/>
    <property type="match status" value="1"/>
</dbReference>
<dbReference type="FunFam" id="3.40.640.10:FF:000148">
    <property type="entry name" value="Arginine decarboxylase"/>
    <property type="match status" value="1"/>
</dbReference>
<dbReference type="Gene3D" id="3.90.1150.10">
    <property type="entry name" value="Aspartate Aminotransferase, domain 1"/>
    <property type="match status" value="1"/>
</dbReference>
<dbReference type="Gene3D" id="3.90.105.10">
    <property type="entry name" value="Molybdopterin biosynthesis moea protein, domain 2"/>
    <property type="match status" value="1"/>
</dbReference>
<dbReference type="Gene3D" id="3.40.640.10">
    <property type="entry name" value="Type I PLP-dependent aspartate aminotransferase-like (Major domain)"/>
    <property type="match status" value="1"/>
</dbReference>
<dbReference type="InterPro" id="IPR000310">
    <property type="entry name" value="Orn/Lys/Arg_deCO2ase_major_dom"/>
</dbReference>
<dbReference type="InterPro" id="IPR052357">
    <property type="entry name" value="Orn_Lys_Arg_decarboxylase-I"/>
</dbReference>
<dbReference type="InterPro" id="IPR008286">
    <property type="entry name" value="Prn/Lys/Arg_de-COase_C"/>
</dbReference>
<dbReference type="InterPro" id="IPR015424">
    <property type="entry name" value="PyrdxlP-dep_Trfase"/>
</dbReference>
<dbReference type="InterPro" id="IPR015421">
    <property type="entry name" value="PyrdxlP-dep_Trfase_major"/>
</dbReference>
<dbReference type="InterPro" id="IPR015422">
    <property type="entry name" value="PyrdxlP-dep_Trfase_small"/>
</dbReference>
<dbReference type="PANTHER" id="PTHR43277">
    <property type="entry name" value="ARGININE DECARBOXYLASE"/>
    <property type="match status" value="1"/>
</dbReference>
<dbReference type="PANTHER" id="PTHR43277:SF4">
    <property type="entry name" value="ARGININE DECARBOXYLASE"/>
    <property type="match status" value="1"/>
</dbReference>
<dbReference type="Pfam" id="PF01276">
    <property type="entry name" value="OKR_DC_1"/>
    <property type="match status" value="1"/>
</dbReference>
<dbReference type="Pfam" id="PF03711">
    <property type="entry name" value="OKR_DC_1_C"/>
    <property type="match status" value="1"/>
</dbReference>
<dbReference type="SUPFAM" id="SSF53383">
    <property type="entry name" value="PLP-dependent transferases"/>
    <property type="match status" value="1"/>
</dbReference>
<dbReference type="PROSITE" id="PS00703">
    <property type="entry name" value="OKR_DC_1"/>
    <property type="match status" value="1"/>
</dbReference>
<accession>Q819L4</accession>
<gene>
    <name type="primary">speA</name>
    <name type="ordered locus">BC_3962</name>
</gene>
<protein>
    <recommendedName>
        <fullName>Arginine decarboxylase</fullName>
        <ecNumber>4.1.1.19</ecNumber>
    </recommendedName>
</protein>
<proteinExistence type="inferred from homology"/>
<reference key="1">
    <citation type="journal article" date="2003" name="Nature">
        <title>Genome sequence of Bacillus cereus and comparative analysis with Bacillus anthracis.</title>
        <authorList>
            <person name="Ivanova N."/>
            <person name="Sorokin A."/>
            <person name="Anderson I."/>
            <person name="Galleron N."/>
            <person name="Candelon B."/>
            <person name="Kapatral V."/>
            <person name="Bhattacharyya A."/>
            <person name="Reznik G."/>
            <person name="Mikhailova N."/>
            <person name="Lapidus A."/>
            <person name="Chu L."/>
            <person name="Mazur M."/>
            <person name="Goltsman E."/>
            <person name="Larsen N."/>
            <person name="D'Souza M."/>
            <person name="Walunas T."/>
            <person name="Grechkin Y."/>
            <person name="Pusch G."/>
            <person name="Haselkorn R."/>
            <person name="Fonstein M."/>
            <person name="Ehrlich S.D."/>
            <person name="Overbeek R."/>
            <person name="Kyrpides N.C."/>
        </authorList>
    </citation>
    <scope>NUCLEOTIDE SEQUENCE [LARGE SCALE GENOMIC DNA]</scope>
    <source>
        <strain>ATCC 14579 / DSM 31 / CCUG 7414 / JCM 2152 / NBRC 15305 / NCIMB 9373 / NCTC 2599 / NRRL B-3711</strain>
    </source>
</reference>
<keyword id="KW-0963">Cytoplasm</keyword>
<keyword id="KW-0210">Decarboxylase</keyword>
<keyword id="KW-0456">Lyase</keyword>
<keyword id="KW-0620">Polyamine biosynthesis</keyword>
<keyword id="KW-0661">Putrescine biosynthesis</keyword>
<keyword id="KW-0663">Pyridoxal phosphate</keyword>
<keyword id="KW-1185">Reference proteome</keyword>
<keyword id="KW-0745">Spermidine biosynthesis</keyword>
<name>SPEA_BACCR</name>
<organism>
    <name type="scientific">Bacillus cereus (strain ATCC 14579 / DSM 31 / CCUG 7414 / JCM 2152 / NBRC 15305 / NCIMB 9373 / NCTC 2599 / NRRL B-3711)</name>
    <dbReference type="NCBI Taxonomy" id="226900"/>
    <lineage>
        <taxon>Bacteria</taxon>
        <taxon>Bacillati</taxon>
        <taxon>Bacillota</taxon>
        <taxon>Bacilli</taxon>
        <taxon>Bacillales</taxon>
        <taxon>Bacillaceae</taxon>
        <taxon>Bacillus</taxon>
        <taxon>Bacillus cereus group</taxon>
    </lineage>
</organism>
<sequence length="460" mass="50324">MSQYETPLFTALVEHSKRNPIQFHIPGHKKGQGMDPTFREFIGHNALAIDLINIAPLDDLHHPKGMIKEAQDLAAAAFGADHTFFSIQGTSGAIMTMVMSVCGPGDKILVPRNVHKSVMSAIIFSGAKPIFMHPEIDPKLGISHGITIQSVKKALEEHSDAKGLLVINPTYFGFAADLEQIVQLAHSYDIPVLVDEAHGVHIHFHDELPMSAMQAGADMAATSVHKLGGSLTQSSILNVKEGLVNVKHVQSIISMLTTTSTSYILLASLDVARKRLATEGTALIEQTIQLAEHVRDAINSIEHLYCPGKEMLGTDATFNYDPTKIIVSVKDLGITGHQAEVWLREQYNIEVELSDLYNILCLITLGDTESDTNTLIAALQDLAATFRNRADKGVQVQVEIPEIPVLALSPRDAFYSETEVIPFENAAGRIIADFVMVYPPGIPIFTPGGNYYTRKLRVYS</sequence>
<comment type="function">
    <text evidence="1">Catalyzes the formation of agmatine from arginine.</text>
</comment>
<comment type="catalytic activity">
    <reaction>
        <text>L-arginine + H(+) = agmatine + CO2</text>
        <dbReference type="Rhea" id="RHEA:17641"/>
        <dbReference type="ChEBI" id="CHEBI:15378"/>
        <dbReference type="ChEBI" id="CHEBI:16526"/>
        <dbReference type="ChEBI" id="CHEBI:32682"/>
        <dbReference type="ChEBI" id="CHEBI:58145"/>
        <dbReference type="EC" id="4.1.1.19"/>
    </reaction>
</comment>
<comment type="cofactor">
    <cofactor evidence="1">
        <name>pyridoxal 5'-phosphate</name>
        <dbReference type="ChEBI" id="CHEBI:597326"/>
    </cofactor>
</comment>
<comment type="pathway">
    <text>Amine and polyamine biosynthesis; agmatine biosynthesis; agmatine from L-arginine: step 1/1.</text>
</comment>
<comment type="subcellular location">
    <subcellularLocation>
        <location evidence="2">Cytoplasm</location>
    </subcellularLocation>
</comment>
<comment type="similarity">
    <text evidence="2">Belongs to the Orn/Lys/Arg decarboxylase class-I family.</text>
</comment>
<feature type="chain" id="PRO_0000201145" description="Arginine decarboxylase">
    <location>
        <begin position="1"/>
        <end position="460"/>
    </location>
</feature>
<feature type="modified residue" description="N6-(pyridoxal phosphate)lysine" evidence="1">
    <location>
        <position position="226"/>
    </location>
</feature>
<evidence type="ECO:0000250" key="1"/>
<evidence type="ECO:0000305" key="2"/>